<dbReference type="EC" id="1.11.1.11" evidence="8"/>
<dbReference type="EMBL" id="AB114855">
    <property type="protein sequence ID" value="BAC79362.1"/>
    <property type="molecule type" value="mRNA"/>
</dbReference>
<dbReference type="EMBL" id="AL606706">
    <property type="protein sequence ID" value="CAD41021.1"/>
    <property type="status" value="ALT_SEQ"/>
    <property type="molecule type" value="Genomic_DNA"/>
</dbReference>
<dbReference type="EMBL" id="AP008210">
    <property type="protein sequence ID" value="BAF14758.1"/>
    <property type="molecule type" value="Genomic_DNA"/>
</dbReference>
<dbReference type="EMBL" id="AP014960">
    <property type="protein sequence ID" value="BAS89295.1"/>
    <property type="molecule type" value="Genomic_DNA"/>
</dbReference>
<dbReference type="EMBL" id="CM000141">
    <property type="protein sequence ID" value="EEE61038.1"/>
    <property type="molecule type" value="Genomic_DNA"/>
</dbReference>
<dbReference type="EMBL" id="AK063934">
    <property type="protein sequence ID" value="BAG88918.1"/>
    <property type="molecule type" value="mRNA"/>
</dbReference>
<dbReference type="EMBL" id="AK103344">
    <property type="protein sequence ID" value="BAG96031.1"/>
    <property type="molecule type" value="mRNA"/>
</dbReference>
<dbReference type="RefSeq" id="XP_015635863.1">
    <property type="nucleotide sequence ID" value="XM_015780377.1"/>
</dbReference>
<dbReference type="SMR" id="Q7XJ02"/>
<dbReference type="FunCoup" id="Q7XJ02">
    <property type="interactions" value="732"/>
</dbReference>
<dbReference type="STRING" id="39947.Q7XJ02"/>
<dbReference type="PeroxiBase" id="1871">
    <property type="entry name" value="OsAPx07"/>
</dbReference>
<dbReference type="PaxDb" id="39947-Q7XJ02"/>
<dbReference type="EnsemblPlants" id="Os04t0434800-01">
    <property type="protein sequence ID" value="Os04t0434800-01"/>
    <property type="gene ID" value="Os04g0434800"/>
</dbReference>
<dbReference type="EnsemblPlants" id="Os04t0434800-02">
    <property type="protein sequence ID" value="Os04t0434800-02"/>
    <property type="gene ID" value="Os04g0434800"/>
</dbReference>
<dbReference type="Gramene" id="Os04t0434800-01">
    <property type="protein sequence ID" value="Os04t0434800-01"/>
    <property type="gene ID" value="Os04g0434800"/>
</dbReference>
<dbReference type="Gramene" id="Os04t0434800-02">
    <property type="protein sequence ID" value="Os04t0434800-02"/>
    <property type="gene ID" value="Os04g0434800"/>
</dbReference>
<dbReference type="KEGG" id="dosa:Os04g0434800"/>
<dbReference type="eggNOG" id="ENOG502QS7Q">
    <property type="taxonomic scope" value="Eukaryota"/>
</dbReference>
<dbReference type="HOGENOM" id="CLU_036959_2_1_1"/>
<dbReference type="InParanoid" id="Q7XJ02"/>
<dbReference type="OMA" id="QRKWNGP"/>
<dbReference type="OrthoDB" id="2859658at2759"/>
<dbReference type="BRENDA" id="1.11.1.11">
    <property type="organism ID" value="4460"/>
</dbReference>
<dbReference type="Proteomes" id="UP000000763">
    <property type="component" value="Chromosome 4"/>
</dbReference>
<dbReference type="Proteomes" id="UP000007752">
    <property type="component" value="Chromosome 4"/>
</dbReference>
<dbReference type="Proteomes" id="UP000059680">
    <property type="component" value="Chromosome 4"/>
</dbReference>
<dbReference type="GO" id="GO:0009570">
    <property type="term" value="C:chloroplast stroma"/>
    <property type="evidence" value="ECO:0007669"/>
    <property type="project" value="UniProtKB-SubCell"/>
</dbReference>
<dbReference type="GO" id="GO:0020037">
    <property type="term" value="F:heme binding"/>
    <property type="evidence" value="ECO:0007669"/>
    <property type="project" value="InterPro"/>
</dbReference>
<dbReference type="GO" id="GO:0016688">
    <property type="term" value="F:L-ascorbate peroxidase activity"/>
    <property type="evidence" value="ECO:0007669"/>
    <property type="project" value="UniProtKB-EC"/>
</dbReference>
<dbReference type="GO" id="GO:0046872">
    <property type="term" value="F:metal ion binding"/>
    <property type="evidence" value="ECO:0007669"/>
    <property type="project" value="UniProtKB-KW"/>
</dbReference>
<dbReference type="GO" id="GO:0004601">
    <property type="term" value="F:peroxidase activity"/>
    <property type="evidence" value="ECO:0000318"/>
    <property type="project" value="GO_Central"/>
</dbReference>
<dbReference type="GO" id="GO:0034599">
    <property type="term" value="P:cellular response to oxidative stress"/>
    <property type="evidence" value="ECO:0000318"/>
    <property type="project" value="GO_Central"/>
</dbReference>
<dbReference type="GO" id="GO:0042744">
    <property type="term" value="P:hydrogen peroxide catabolic process"/>
    <property type="evidence" value="ECO:0000318"/>
    <property type="project" value="GO_Central"/>
</dbReference>
<dbReference type="GO" id="GO:0000302">
    <property type="term" value="P:response to reactive oxygen species"/>
    <property type="evidence" value="ECO:0000318"/>
    <property type="project" value="GO_Central"/>
</dbReference>
<dbReference type="CDD" id="cd00691">
    <property type="entry name" value="ascorbate_peroxidase"/>
    <property type="match status" value="1"/>
</dbReference>
<dbReference type="FunFam" id="1.10.520.10:FF:000007">
    <property type="entry name" value="L-ascorbate peroxidase S chloroplastic/mitochondrial"/>
    <property type="match status" value="1"/>
</dbReference>
<dbReference type="FunFam" id="1.10.420.10:FF:000005">
    <property type="entry name" value="L-ascorbate peroxidase T, chloroplastic"/>
    <property type="match status" value="1"/>
</dbReference>
<dbReference type="Gene3D" id="1.10.520.10">
    <property type="match status" value="1"/>
</dbReference>
<dbReference type="Gene3D" id="1.10.420.10">
    <property type="entry name" value="Peroxidase, domain 2"/>
    <property type="match status" value="1"/>
</dbReference>
<dbReference type="InterPro" id="IPR044831">
    <property type="entry name" value="Ccp1-like"/>
</dbReference>
<dbReference type="InterPro" id="IPR002016">
    <property type="entry name" value="Haem_peroxidase"/>
</dbReference>
<dbReference type="InterPro" id="IPR010255">
    <property type="entry name" value="Haem_peroxidase_sf"/>
</dbReference>
<dbReference type="InterPro" id="IPR002207">
    <property type="entry name" value="Peroxidase_I"/>
</dbReference>
<dbReference type="InterPro" id="IPR019793">
    <property type="entry name" value="Peroxidases_heam-ligand_BS"/>
</dbReference>
<dbReference type="PANTHER" id="PTHR31356:SF64">
    <property type="entry name" value="L-ASCORBATE PEROXIDASE 7, CHLOROPLASTIC-RELATED"/>
    <property type="match status" value="1"/>
</dbReference>
<dbReference type="PANTHER" id="PTHR31356">
    <property type="entry name" value="THYLAKOID LUMENAL 29 KDA PROTEIN, CHLOROPLASTIC-RELATED"/>
    <property type="match status" value="1"/>
</dbReference>
<dbReference type="Pfam" id="PF00141">
    <property type="entry name" value="peroxidase"/>
    <property type="match status" value="1"/>
</dbReference>
<dbReference type="PRINTS" id="PR00459">
    <property type="entry name" value="ASPEROXIDASE"/>
</dbReference>
<dbReference type="PRINTS" id="PR00458">
    <property type="entry name" value="PEROXIDASE"/>
</dbReference>
<dbReference type="SUPFAM" id="SSF48113">
    <property type="entry name" value="Heme-dependent peroxidases"/>
    <property type="match status" value="1"/>
</dbReference>
<dbReference type="PROSITE" id="PS00435">
    <property type="entry name" value="PEROXIDASE_1"/>
    <property type="match status" value="1"/>
</dbReference>
<dbReference type="PROSITE" id="PS50873">
    <property type="entry name" value="PEROXIDASE_4"/>
    <property type="match status" value="1"/>
</dbReference>
<reference key="1">
    <citation type="submission" date="2003-07" db="EMBL/GenBank/DDBJ databases">
        <title>The expression of rice chloroplastic ascorbate peroxidase genes during greening.</title>
        <authorList>
            <person name="Morita S."/>
            <person name="Kotani T."/>
            <person name="Kaminaka H."/>
            <person name="Masumura T."/>
            <person name="Tanaka K."/>
        </authorList>
    </citation>
    <scope>NUCLEOTIDE SEQUENCE [MRNA]</scope>
    <source>
        <strain>cv. Nipponbare</strain>
    </source>
</reference>
<reference key="2">
    <citation type="journal article" date="2002" name="Nature">
        <title>Sequence and analysis of rice chromosome 4.</title>
        <authorList>
            <person name="Feng Q."/>
            <person name="Zhang Y."/>
            <person name="Hao P."/>
            <person name="Wang S."/>
            <person name="Fu G."/>
            <person name="Huang Y."/>
            <person name="Li Y."/>
            <person name="Zhu J."/>
            <person name="Liu Y."/>
            <person name="Hu X."/>
            <person name="Jia P."/>
            <person name="Zhang Y."/>
            <person name="Zhao Q."/>
            <person name="Ying K."/>
            <person name="Yu S."/>
            <person name="Tang Y."/>
            <person name="Weng Q."/>
            <person name="Zhang L."/>
            <person name="Lu Y."/>
            <person name="Mu J."/>
            <person name="Lu Y."/>
            <person name="Zhang L.S."/>
            <person name="Yu Z."/>
            <person name="Fan D."/>
            <person name="Liu X."/>
            <person name="Lu T."/>
            <person name="Li C."/>
            <person name="Wu Y."/>
            <person name="Sun T."/>
            <person name="Lei H."/>
            <person name="Li T."/>
            <person name="Hu H."/>
            <person name="Guan J."/>
            <person name="Wu M."/>
            <person name="Zhang R."/>
            <person name="Zhou B."/>
            <person name="Chen Z."/>
            <person name="Chen L."/>
            <person name="Jin Z."/>
            <person name="Wang R."/>
            <person name="Yin H."/>
            <person name="Cai Z."/>
            <person name="Ren S."/>
            <person name="Lv G."/>
            <person name="Gu W."/>
            <person name="Zhu G."/>
            <person name="Tu Y."/>
            <person name="Jia J."/>
            <person name="Zhang Y."/>
            <person name="Chen J."/>
            <person name="Kang H."/>
            <person name="Chen X."/>
            <person name="Shao C."/>
            <person name="Sun Y."/>
            <person name="Hu Q."/>
            <person name="Zhang X."/>
            <person name="Zhang W."/>
            <person name="Wang L."/>
            <person name="Ding C."/>
            <person name="Sheng H."/>
            <person name="Gu J."/>
            <person name="Chen S."/>
            <person name="Ni L."/>
            <person name="Zhu F."/>
            <person name="Chen W."/>
            <person name="Lan L."/>
            <person name="Lai Y."/>
            <person name="Cheng Z."/>
            <person name="Gu M."/>
            <person name="Jiang J."/>
            <person name="Li J."/>
            <person name="Hong G."/>
            <person name="Xue Y."/>
            <person name="Han B."/>
        </authorList>
    </citation>
    <scope>NUCLEOTIDE SEQUENCE [LARGE SCALE GENOMIC DNA]</scope>
    <source>
        <strain>cv. Nipponbare</strain>
    </source>
</reference>
<reference key="3">
    <citation type="journal article" date="2005" name="Nature">
        <title>The map-based sequence of the rice genome.</title>
        <authorList>
            <consortium name="International rice genome sequencing project (IRGSP)"/>
        </authorList>
    </citation>
    <scope>NUCLEOTIDE SEQUENCE [LARGE SCALE GENOMIC DNA]</scope>
    <source>
        <strain>cv. Nipponbare</strain>
    </source>
</reference>
<reference key="4">
    <citation type="journal article" date="2008" name="Nucleic Acids Res.">
        <title>The rice annotation project database (RAP-DB): 2008 update.</title>
        <authorList>
            <consortium name="The rice annotation project (RAP)"/>
        </authorList>
    </citation>
    <scope>GENOME REANNOTATION</scope>
    <source>
        <strain>cv. Nipponbare</strain>
    </source>
</reference>
<reference key="5">
    <citation type="journal article" date="2013" name="Rice">
        <title>Improvement of the Oryza sativa Nipponbare reference genome using next generation sequence and optical map data.</title>
        <authorList>
            <person name="Kawahara Y."/>
            <person name="de la Bastide M."/>
            <person name="Hamilton J.P."/>
            <person name="Kanamori H."/>
            <person name="McCombie W.R."/>
            <person name="Ouyang S."/>
            <person name="Schwartz D.C."/>
            <person name="Tanaka T."/>
            <person name="Wu J."/>
            <person name="Zhou S."/>
            <person name="Childs K.L."/>
            <person name="Davidson R.M."/>
            <person name="Lin H."/>
            <person name="Quesada-Ocampo L."/>
            <person name="Vaillancourt B."/>
            <person name="Sakai H."/>
            <person name="Lee S.S."/>
            <person name="Kim J."/>
            <person name="Numa H."/>
            <person name="Itoh T."/>
            <person name="Buell C.R."/>
            <person name="Matsumoto T."/>
        </authorList>
    </citation>
    <scope>GENOME REANNOTATION</scope>
    <source>
        <strain>cv. Nipponbare</strain>
    </source>
</reference>
<reference key="6">
    <citation type="journal article" date="2005" name="PLoS Biol.">
        <title>The genomes of Oryza sativa: a history of duplications.</title>
        <authorList>
            <person name="Yu J."/>
            <person name="Wang J."/>
            <person name="Lin W."/>
            <person name="Li S."/>
            <person name="Li H."/>
            <person name="Zhou J."/>
            <person name="Ni P."/>
            <person name="Dong W."/>
            <person name="Hu S."/>
            <person name="Zeng C."/>
            <person name="Zhang J."/>
            <person name="Zhang Y."/>
            <person name="Li R."/>
            <person name="Xu Z."/>
            <person name="Li S."/>
            <person name="Li X."/>
            <person name="Zheng H."/>
            <person name="Cong L."/>
            <person name="Lin L."/>
            <person name="Yin J."/>
            <person name="Geng J."/>
            <person name="Li G."/>
            <person name="Shi J."/>
            <person name="Liu J."/>
            <person name="Lv H."/>
            <person name="Li J."/>
            <person name="Wang J."/>
            <person name="Deng Y."/>
            <person name="Ran L."/>
            <person name="Shi X."/>
            <person name="Wang X."/>
            <person name="Wu Q."/>
            <person name="Li C."/>
            <person name="Ren X."/>
            <person name="Wang J."/>
            <person name="Wang X."/>
            <person name="Li D."/>
            <person name="Liu D."/>
            <person name="Zhang X."/>
            <person name="Ji Z."/>
            <person name="Zhao W."/>
            <person name="Sun Y."/>
            <person name="Zhang Z."/>
            <person name="Bao J."/>
            <person name="Han Y."/>
            <person name="Dong L."/>
            <person name="Ji J."/>
            <person name="Chen P."/>
            <person name="Wu S."/>
            <person name="Liu J."/>
            <person name="Xiao Y."/>
            <person name="Bu D."/>
            <person name="Tan J."/>
            <person name="Yang L."/>
            <person name="Ye C."/>
            <person name="Zhang J."/>
            <person name="Xu J."/>
            <person name="Zhou Y."/>
            <person name="Yu Y."/>
            <person name="Zhang B."/>
            <person name="Zhuang S."/>
            <person name="Wei H."/>
            <person name="Liu B."/>
            <person name="Lei M."/>
            <person name="Yu H."/>
            <person name="Li Y."/>
            <person name="Xu H."/>
            <person name="Wei S."/>
            <person name="He X."/>
            <person name="Fang L."/>
            <person name="Zhang Z."/>
            <person name="Zhang Y."/>
            <person name="Huang X."/>
            <person name="Su Z."/>
            <person name="Tong W."/>
            <person name="Li J."/>
            <person name="Tong Z."/>
            <person name="Li S."/>
            <person name="Ye J."/>
            <person name="Wang L."/>
            <person name="Fang L."/>
            <person name="Lei T."/>
            <person name="Chen C.-S."/>
            <person name="Chen H.-C."/>
            <person name="Xu Z."/>
            <person name="Li H."/>
            <person name="Huang H."/>
            <person name="Zhang F."/>
            <person name="Xu H."/>
            <person name="Li N."/>
            <person name="Zhao C."/>
            <person name="Li S."/>
            <person name="Dong L."/>
            <person name="Huang Y."/>
            <person name="Li L."/>
            <person name="Xi Y."/>
            <person name="Qi Q."/>
            <person name="Li W."/>
            <person name="Zhang B."/>
            <person name="Hu W."/>
            <person name="Zhang Y."/>
            <person name="Tian X."/>
            <person name="Jiao Y."/>
            <person name="Liang X."/>
            <person name="Jin J."/>
            <person name="Gao L."/>
            <person name="Zheng W."/>
            <person name="Hao B."/>
            <person name="Liu S.-M."/>
            <person name="Wang W."/>
            <person name="Yuan L."/>
            <person name="Cao M."/>
            <person name="McDermott J."/>
            <person name="Samudrala R."/>
            <person name="Wang J."/>
            <person name="Wong G.K.-S."/>
            <person name="Yang H."/>
        </authorList>
    </citation>
    <scope>NUCLEOTIDE SEQUENCE [LARGE SCALE GENOMIC DNA]</scope>
    <source>
        <strain>cv. Nipponbare</strain>
    </source>
</reference>
<reference key="7">
    <citation type="journal article" date="2003" name="Science">
        <title>Collection, mapping, and annotation of over 28,000 cDNA clones from japonica rice.</title>
        <authorList>
            <consortium name="The rice full-length cDNA consortium"/>
        </authorList>
    </citation>
    <scope>NUCLEOTIDE SEQUENCE [LARGE SCALE MRNA]</scope>
    <source>
        <strain>cv. Nipponbare</strain>
    </source>
</reference>
<reference key="8">
    <citation type="journal article" date="2004" name="J. Mol. Evol.">
        <title>Analysis of the molecular evolutionary history of the ascorbate peroxidase gene family: inferences from the rice genome.</title>
        <authorList>
            <person name="Teixeira F.K."/>
            <person name="Menezes-Benavente L."/>
            <person name="Margis R."/>
            <person name="Margis-Pinheiro M."/>
        </authorList>
    </citation>
    <scope>NOMENCLATURE</scope>
</reference>
<reference key="9">
    <citation type="journal article" date="2006" name="Planta">
        <title>Rice ascorbate peroxidase gene family encodes functionally diverse isoforms localized in different subcellular compartments.</title>
        <authorList>
            <person name="Teixeira F.K."/>
            <person name="Menezes-Benavente L."/>
            <person name="Galvao V.C."/>
            <person name="Margis R."/>
            <person name="Margis-Pinheiro M."/>
        </authorList>
    </citation>
    <scope>TISSUE SPECIFICITY</scope>
    <scope>INDUCTION BY SALT STRESS</scope>
</reference>
<reference key="10">
    <citation type="journal article" date="2015" name="J. Plant Physiol.">
        <title>Transcriptional profile of genes involved in ascorbate glutathione cycle in senescing leaves for an early senescence leaf (esl) rice mutant.</title>
        <authorList>
            <person name="Li Z."/>
            <person name="Su D."/>
            <person name="Lei B."/>
            <person name="Wang F."/>
            <person name="Geng W."/>
            <person name="Pan G."/>
            <person name="Cheng F."/>
        </authorList>
    </citation>
    <scope>INDUCTION</scope>
</reference>
<evidence type="ECO:0000250" key="1"/>
<evidence type="ECO:0000255" key="2"/>
<evidence type="ECO:0000255" key="3">
    <source>
        <dbReference type="PROSITE-ProRule" id="PRU00297"/>
    </source>
</evidence>
<evidence type="ECO:0000256" key="4">
    <source>
        <dbReference type="SAM" id="MobiDB-lite"/>
    </source>
</evidence>
<evidence type="ECO:0000269" key="5">
    <source>
    </source>
</evidence>
<evidence type="ECO:0000269" key="6">
    <source>
    </source>
</evidence>
<evidence type="ECO:0000303" key="7">
    <source>
    </source>
</evidence>
<evidence type="ECO:0000305" key="8"/>
<evidence type="ECO:0000312" key="9">
    <source>
        <dbReference type="EMBL" id="BAS89295.1"/>
    </source>
</evidence>
<evidence type="ECO:0000312" key="10">
    <source>
        <dbReference type="EMBL" id="CAD41021.1"/>
    </source>
</evidence>
<evidence type="ECO:0000312" key="11">
    <source>
        <dbReference type="EMBL" id="EEE61038.1"/>
    </source>
</evidence>
<keyword id="KW-0106">Calcium</keyword>
<keyword id="KW-0150">Chloroplast</keyword>
<keyword id="KW-0349">Heme</keyword>
<keyword id="KW-0376">Hydrogen peroxide</keyword>
<keyword id="KW-0408">Iron</keyword>
<keyword id="KW-0479">Metal-binding</keyword>
<keyword id="KW-0560">Oxidoreductase</keyword>
<keyword id="KW-0575">Peroxidase</keyword>
<keyword id="KW-0934">Plastid</keyword>
<keyword id="KW-0630">Potassium</keyword>
<keyword id="KW-1185">Reference proteome</keyword>
<keyword id="KW-0809">Transit peptide</keyword>
<feature type="transit peptide" description="Chloroplast" evidence="2">
    <location>
        <begin position="1"/>
        <end position="71"/>
    </location>
</feature>
<feature type="chain" id="PRO_0000042657" description="Probable L-ascorbate peroxidase 7, chloroplastic">
    <location>
        <begin position="72"/>
        <end position="359"/>
    </location>
</feature>
<feature type="region of interest" description="Disordered" evidence="4">
    <location>
        <begin position="251"/>
        <end position="277"/>
    </location>
</feature>
<feature type="compositionally biased region" description="Basic and acidic residues" evidence="4">
    <location>
        <begin position="252"/>
        <end position="266"/>
    </location>
</feature>
<feature type="active site" description="Proton acceptor" evidence="3">
    <location>
        <position position="118"/>
    </location>
</feature>
<feature type="binding site" description="axial binding residue">
    <location>
        <position position="247"/>
    </location>
    <ligand>
        <name>heme b</name>
        <dbReference type="ChEBI" id="CHEBI:60344"/>
    </ligand>
    <ligandPart>
        <name>Fe</name>
        <dbReference type="ChEBI" id="CHEBI:18248"/>
    </ligandPart>
</feature>
<feature type="binding site" evidence="1">
    <location>
        <position position="248"/>
    </location>
    <ligand>
        <name>K(+)</name>
        <dbReference type="ChEBI" id="CHEBI:29103"/>
    </ligand>
</feature>
<feature type="binding site" evidence="1">
    <location>
        <position position="280"/>
    </location>
    <ligand>
        <name>K(+)</name>
        <dbReference type="ChEBI" id="CHEBI:29103"/>
    </ligand>
</feature>
<feature type="binding site" evidence="1">
    <location>
        <position position="287"/>
    </location>
    <ligand>
        <name>K(+)</name>
        <dbReference type="ChEBI" id="CHEBI:29103"/>
    </ligand>
</feature>
<feature type="site" description="Transition state stabilizer" evidence="3">
    <location>
        <position position="114"/>
    </location>
</feature>
<proteinExistence type="evidence at transcript level"/>
<gene>
    <name evidence="7" type="primary">APX7</name>
    <name evidence="9" type="ordered locus">Os04g0434800</name>
    <name evidence="8" type="ordered locus">LOC_Os04g35520</name>
    <name evidence="11" type="ORF">OsJ_14879</name>
    <name evidence="10" type="ORF">OSJNBb0086G13.10</name>
</gene>
<protein>
    <recommendedName>
        <fullName evidence="8">Probable L-ascorbate peroxidase 7, chloroplastic</fullName>
        <ecNumber evidence="8">1.11.1.11</ecNumber>
    </recommendedName>
    <alternativeName>
        <fullName evidence="7">OsAPx7</fullName>
    </alternativeName>
</protein>
<comment type="function">
    <text evidence="1">Plays a key role in hydrogen peroxide removal.</text>
</comment>
<comment type="catalytic activity">
    <reaction evidence="8">
        <text>L-ascorbate + H2O2 = L-dehydroascorbate + 2 H2O</text>
        <dbReference type="Rhea" id="RHEA:22996"/>
        <dbReference type="ChEBI" id="CHEBI:15377"/>
        <dbReference type="ChEBI" id="CHEBI:16240"/>
        <dbReference type="ChEBI" id="CHEBI:38290"/>
        <dbReference type="ChEBI" id="CHEBI:58539"/>
        <dbReference type="EC" id="1.11.1.11"/>
    </reaction>
</comment>
<comment type="cofactor">
    <cofactor evidence="1">
        <name>heme b</name>
        <dbReference type="ChEBI" id="CHEBI:60344"/>
    </cofactor>
    <text evidence="1">Binds 1 heme b (iron(II)-protoporphyrin IX) group.</text>
</comment>
<comment type="subcellular location">
    <subcellularLocation>
        <location evidence="8">Plastid</location>
        <location evidence="8">Chloroplast stroma</location>
    </subcellularLocation>
</comment>
<comment type="tissue specificity">
    <text evidence="5">Expressed in roots, leaves, stems and flowers.</text>
</comment>
<comment type="induction">
    <text evidence="5 6">Induced by salt stress (PubMed:16397796). Down-regulated by hydrogen peroxide in leaves (PubMed:25546583).</text>
</comment>
<comment type="miscellaneous">
    <text evidence="1">Binds one cation per subunit; probably K(+), but might also be Ca(2+).</text>
</comment>
<comment type="similarity">
    <text evidence="8">Belongs to the peroxidase family. Ascorbate peroxidase subfamily.</text>
</comment>
<comment type="sequence caution" evidence="8">
    <conflict type="erroneous gene model prediction">
        <sequence resource="EMBL-CDS" id="CAD41021"/>
    </conflict>
</comment>
<accession>Q7XJ02</accession>
<accession>Q0JD29</accession>
<accession>Q7XUS8</accession>
<organism>
    <name type="scientific">Oryza sativa subsp. japonica</name>
    <name type="common">Rice</name>
    <dbReference type="NCBI Taxonomy" id="39947"/>
    <lineage>
        <taxon>Eukaryota</taxon>
        <taxon>Viridiplantae</taxon>
        <taxon>Streptophyta</taxon>
        <taxon>Embryophyta</taxon>
        <taxon>Tracheophyta</taxon>
        <taxon>Spermatophyta</taxon>
        <taxon>Magnoliopsida</taxon>
        <taxon>Liliopsida</taxon>
        <taxon>Poales</taxon>
        <taxon>Poaceae</taxon>
        <taxon>BOP clade</taxon>
        <taxon>Oryzoideae</taxon>
        <taxon>Oryzeae</taxon>
        <taxon>Oryzinae</taxon>
        <taxon>Oryza</taxon>
        <taxon>Oryza sativa</taxon>
    </lineage>
</organism>
<name>APX7_ORYSJ</name>
<sequence>MAAQRLAALHAAAPSAFSSTSSASHGRPAARSSTTALLPVALPRASATLRAAPSRLLPQEAKAAGSGRSVMCMASASASAASAAVASGAAELKAAREDIRELLKTTHCHPILVRLGWHDSGTYDKNIKEWPQRGGANGSLRFDVELKHGANAGLVNALKLVQPIKDKYPNISYADLFQLASATAIEEAGGPKIPMTYGRIDVTGPEQCPPEGKLPDAGPSAPADHLRKVFYRMGLDDKEIVVLSGAHTLGRSRPERSGWGKPETKYTKNGPGAPGGQSWTAEWLKFDNSYFKEIKEKRDQDLLVLPTDAALFEDPTFKVYAEKYAEDQEAFFKDYAGAHAKLSNLGAKFNPPEGFTLDG</sequence>